<gene>
    <name type="ordered locus">spyM18_1033</name>
</gene>
<accession>Q8P171</accession>
<protein>
    <recommendedName>
        <fullName>UPF0324 membrane protein spyM18_1033</fullName>
    </recommendedName>
</protein>
<comment type="subcellular location">
    <subcellularLocation>
        <location evidence="2">Cell membrane</location>
        <topology evidence="2">Multi-pass membrane protein</topology>
    </subcellularLocation>
</comment>
<comment type="similarity">
    <text evidence="2">Belongs to the UPF0324 family.</text>
</comment>
<organism>
    <name type="scientific">Streptococcus pyogenes serotype M18 (strain MGAS8232)</name>
    <dbReference type="NCBI Taxonomy" id="186103"/>
    <lineage>
        <taxon>Bacteria</taxon>
        <taxon>Bacillati</taxon>
        <taxon>Bacillota</taxon>
        <taxon>Bacilli</taxon>
        <taxon>Lactobacillales</taxon>
        <taxon>Streptococcaceae</taxon>
        <taxon>Streptococcus</taxon>
    </lineage>
</organism>
<name>Y1033_STRP8</name>
<feature type="chain" id="PRO_0000157467" description="UPF0324 membrane protein spyM18_1033">
    <location>
        <begin position="1"/>
        <end position="339"/>
    </location>
</feature>
<feature type="transmembrane region" description="Helical" evidence="1">
    <location>
        <begin position="7"/>
        <end position="24"/>
    </location>
</feature>
<feature type="transmembrane region" description="Helical" evidence="1">
    <location>
        <begin position="28"/>
        <end position="50"/>
    </location>
</feature>
<feature type="transmembrane region" description="Helical" evidence="1">
    <location>
        <begin position="57"/>
        <end position="79"/>
    </location>
</feature>
<feature type="transmembrane region" description="Helical" evidence="1">
    <location>
        <begin position="84"/>
        <end position="106"/>
    </location>
</feature>
<feature type="transmembrane region" description="Helical" evidence="1">
    <location>
        <begin position="118"/>
        <end position="140"/>
    </location>
</feature>
<feature type="transmembrane region" description="Helical" evidence="1">
    <location>
        <begin position="150"/>
        <end position="172"/>
    </location>
</feature>
<feature type="transmembrane region" description="Helical" evidence="1">
    <location>
        <begin position="256"/>
        <end position="275"/>
    </location>
</feature>
<feature type="transmembrane region" description="Helical" evidence="1">
    <location>
        <begin position="290"/>
        <end position="307"/>
    </location>
</feature>
<feature type="transmembrane region" description="Helical" evidence="1">
    <location>
        <begin position="314"/>
        <end position="336"/>
    </location>
</feature>
<evidence type="ECO:0000255" key="1"/>
<evidence type="ECO:0000305" key="2"/>
<reference key="1">
    <citation type="journal article" date="2002" name="Proc. Natl. Acad. Sci. U.S.A.">
        <title>Genome sequence and comparative microarray analysis of serotype M18 group A Streptococcus strains associated with acute rheumatic fever outbreaks.</title>
        <authorList>
            <person name="Smoot J.C."/>
            <person name="Barbian K.D."/>
            <person name="Van Gompel J.J."/>
            <person name="Smoot L.M."/>
            <person name="Chaussee M.S."/>
            <person name="Sylva G.L."/>
            <person name="Sturdevant D.E."/>
            <person name="Ricklefs S.M."/>
            <person name="Porcella S.F."/>
            <person name="Parkins L.D."/>
            <person name="Beres S.B."/>
            <person name="Campbell D.S."/>
            <person name="Smith T.M."/>
            <person name="Zhang Q."/>
            <person name="Kapur V."/>
            <person name="Daly J.A."/>
            <person name="Veasy L.G."/>
            <person name="Musser J.M."/>
        </authorList>
    </citation>
    <scope>NUCLEOTIDE SEQUENCE [LARGE SCALE GENOMIC DNA]</scope>
    <source>
        <strain>MGAS8232</strain>
    </source>
</reference>
<sequence length="339" mass="36165">MSTHLRKLPGLLLCLLLALPAWYLGRLFPIIGAPVFAILLGMLLALFYGHRDKTKEGISFTSKCILQTAVVLLGFGLNLTQVMAVGMQSLPIIISTIATALLVAYGLQKWLRLDVNTATLVGVGSSICGGSAIAATAPVIKAKDDEVAKAISVIFLFNMLAALLFPSLGQLLGLSNEGFAIFAGTAVNDTSSVTATATAWDAIHHSNTLDGATIVKLTRTLAILPITLGLSLYRAKKEHDIVTEENFSLRKSFPRFILFFLLASLITTLMTSFGVSAEVFHSLKTLSKFFIVMAMAAIGLNTNLVKLIKTGGQAILLGAICWVAITLVSLAMQLSLGIW</sequence>
<keyword id="KW-1003">Cell membrane</keyword>
<keyword id="KW-0472">Membrane</keyword>
<keyword id="KW-0812">Transmembrane</keyword>
<keyword id="KW-1133">Transmembrane helix</keyword>
<proteinExistence type="inferred from homology"/>
<dbReference type="EMBL" id="AE009949">
    <property type="protein sequence ID" value="AAL97663.1"/>
    <property type="molecule type" value="Genomic_DNA"/>
</dbReference>
<dbReference type="RefSeq" id="WP_011017723.1">
    <property type="nucleotide sequence ID" value="NC_003485.1"/>
</dbReference>
<dbReference type="KEGG" id="spm:spyM18_1033"/>
<dbReference type="HOGENOM" id="CLU_033541_2_1_9"/>
<dbReference type="GO" id="GO:0005886">
    <property type="term" value="C:plasma membrane"/>
    <property type="evidence" value="ECO:0007669"/>
    <property type="project" value="UniProtKB-SubCell"/>
</dbReference>
<dbReference type="InterPro" id="IPR018383">
    <property type="entry name" value="UPF0324_pro"/>
</dbReference>
<dbReference type="PANTHER" id="PTHR30106">
    <property type="entry name" value="INNER MEMBRANE PROTEIN YEIH-RELATED"/>
    <property type="match status" value="1"/>
</dbReference>
<dbReference type="PANTHER" id="PTHR30106:SF1">
    <property type="entry name" value="UPF0324 MEMBRANE PROTEIN FN0533"/>
    <property type="match status" value="1"/>
</dbReference>
<dbReference type="Pfam" id="PF03601">
    <property type="entry name" value="Cons_hypoth698"/>
    <property type="match status" value="1"/>
</dbReference>